<organism evidence="8">
    <name type="scientific">Toxoplasma gondii (strain ATCC 50861 / VEG)</name>
    <dbReference type="NCBI Taxonomy" id="432359"/>
    <lineage>
        <taxon>Eukaryota</taxon>
        <taxon>Sar</taxon>
        <taxon>Alveolata</taxon>
        <taxon>Apicomplexa</taxon>
        <taxon>Conoidasida</taxon>
        <taxon>Coccidia</taxon>
        <taxon>Eucoccidiorida</taxon>
        <taxon>Eimeriorina</taxon>
        <taxon>Sarcocystidae</taxon>
        <taxon>Toxoplasma</taxon>
    </lineage>
</organism>
<sequence>MAPRYHSAAEADTGVCGETKSRDSDALYDLPLRDPEEDQTTVALHPGSGEERFPVFQSEFTSVPVSDGGANGVTYPVGGSRKEQDEISSRGPPAYSLEIRGKTSEQLAESGADDEGTNGEKQSLLVPCLAVFSSNYNFTVTSIALFLMNQDPLYKDASDTVVGSSTVKMLSYAGAIVGMCTMGYLGDLIGRRLAMILTLALVFIGALLSSICAWGDGVTVLVIMGVCRFVLGVGSGGVYPLSAVSAAEGAGSEKSNDRSMRVSWAYSMNVPGIMFPYIVALVLWCTTHNVDVCFRILLGFGALPALLIWLPAWRMKEDRAYVAKDFAKHLAGVFVSRSYWRQLLGTGVCWLLYDVTAYGILLVQPEITQSIWGNSSSVTDVIWQNIILNGMGIPGCFMGILVLKQMGVKWLQFWGFVGLAVSAFLMAATVEILQGKAWAQLVLLCIVNFFINWGASITTFILPSLVFPPEVRSTYSGISAALGKIGAVGGIYTMKAILSTGGLTPMMICAGVPSLAAAILTWFYVDPVPNTLRSSFLQCFGSLAGSCPFIDCRKFRRGSRAFE</sequence>
<dbReference type="EMBL" id="LN714500">
    <property type="protein sequence ID" value="CEL76842.1"/>
    <property type="molecule type" value="Genomic_DNA"/>
</dbReference>
<dbReference type="EMBL" id="AAYL02000219">
    <property type="protein sequence ID" value="ESS30895.1"/>
    <property type="molecule type" value="Genomic_DNA"/>
</dbReference>
<dbReference type="SMR" id="A0A125YY03"/>
<dbReference type="STRING" id="432359.A0A125YY03"/>
<dbReference type="PaxDb" id="5811-TGME49_035150"/>
<dbReference type="EnsemblProtists" id="ESS30895">
    <property type="protein sequence ID" value="ESS30895"/>
    <property type="gene ID" value="TGVEG_235150"/>
</dbReference>
<dbReference type="VEuPathDB" id="ToxoDB:TGVEG_235150"/>
<dbReference type="eggNOG" id="KOG0252">
    <property type="taxonomic scope" value="Eukaryota"/>
</dbReference>
<dbReference type="OMA" id="RGPIFIL"/>
<dbReference type="OrthoDB" id="998at5809"/>
<dbReference type="Proteomes" id="UP000002226">
    <property type="component" value="Partially assembled WGS sequence"/>
</dbReference>
<dbReference type="GO" id="GO:0005886">
    <property type="term" value="C:plasma membrane"/>
    <property type="evidence" value="ECO:0007669"/>
    <property type="project" value="UniProtKB-SubCell"/>
</dbReference>
<dbReference type="GO" id="GO:0046943">
    <property type="term" value="F:carboxylic acid transmembrane transporter activity"/>
    <property type="evidence" value="ECO:0007669"/>
    <property type="project" value="TreeGrafter"/>
</dbReference>
<dbReference type="GO" id="GO:0015293">
    <property type="term" value="F:symporter activity"/>
    <property type="evidence" value="ECO:0007669"/>
    <property type="project" value="UniProtKB-KW"/>
</dbReference>
<dbReference type="GO" id="GO:0006817">
    <property type="term" value="P:phosphate ion transport"/>
    <property type="evidence" value="ECO:0007669"/>
    <property type="project" value="UniProtKB-KW"/>
</dbReference>
<dbReference type="Gene3D" id="1.20.1250.20">
    <property type="entry name" value="MFS general substrate transporter like domains"/>
    <property type="match status" value="1"/>
</dbReference>
<dbReference type="InterPro" id="IPR020846">
    <property type="entry name" value="MFS_dom"/>
</dbReference>
<dbReference type="InterPro" id="IPR005828">
    <property type="entry name" value="MFS_sugar_transport-like"/>
</dbReference>
<dbReference type="InterPro" id="IPR036259">
    <property type="entry name" value="MFS_trans_sf"/>
</dbReference>
<dbReference type="PANTHER" id="PTHR23508">
    <property type="entry name" value="CARBOXYLIC ACID TRANSPORTER PROTEIN HOMOLOG"/>
    <property type="match status" value="1"/>
</dbReference>
<dbReference type="PANTHER" id="PTHR23508:SF10">
    <property type="entry name" value="CARBOXYLIC ACID TRANSPORTER PROTEIN HOMOLOG"/>
    <property type="match status" value="1"/>
</dbReference>
<dbReference type="Pfam" id="PF00083">
    <property type="entry name" value="Sugar_tr"/>
    <property type="match status" value="2"/>
</dbReference>
<dbReference type="SUPFAM" id="SSF103473">
    <property type="entry name" value="MFS general substrate transporter"/>
    <property type="match status" value="1"/>
</dbReference>
<dbReference type="PROSITE" id="PS50850">
    <property type="entry name" value="MFS"/>
    <property type="match status" value="1"/>
</dbReference>
<protein>
    <recommendedName>
        <fullName evidence="5">Inorganic phosphate transporter PT2</fullName>
        <shortName evidence="4">TgPT2</shortName>
    </recommendedName>
</protein>
<proteinExistence type="inferred from homology"/>
<reference evidence="6" key="1">
    <citation type="journal article" date="2015" name="PLoS ONE">
        <title>Comprehensive Evaluation of Toxoplasma gondii VEG and Neospora caninum LIV Genomes with Tachyzoite Stage Transcriptome and Proteome Defines Novel Transcript Features.</title>
        <authorList>
            <person name="Ramaprasad A."/>
            <person name="Mourier T."/>
            <person name="Naeem R."/>
            <person name="Malas T.B."/>
            <person name="Moussa E."/>
            <person name="Panigrahi A."/>
            <person name="Vermont S.J."/>
            <person name="Otto T.D."/>
            <person name="Wastling J."/>
            <person name="Pain A."/>
        </authorList>
    </citation>
    <scope>NUCLEOTIDE SEQUENCE [LARGE SCALE GENOMIC DNA]</scope>
    <source>
        <strain evidence="6">ATCC 50861 / VEG</strain>
    </source>
</reference>
<reference evidence="8" key="2">
    <citation type="submission" date="2008-03" db="EMBL/GenBank/DDBJ databases">
        <title>Annotation of Toxoplasma gondii VEG.</title>
        <authorList>
            <person name="Lorenzi H."/>
            <person name="Inman J."/>
            <person name="Amedeo P."/>
            <person name="Brunk B."/>
            <person name="Roos D."/>
            <person name="Caler E."/>
        </authorList>
    </citation>
    <scope>NUCLEOTIDE SEQUENCE [LARGE SCALE GENOMIC DNA]</scope>
    <source>
        <strain evidence="8">ATCC 50861 / VEG</strain>
    </source>
</reference>
<reference evidence="5" key="3">
    <citation type="journal article" date="2022" name="Microbiol. Spectr.">
        <title>A Coccidia-Specific Phosphate Transporter Is Essential for the Growth of Toxoplasma gondii Parasites.</title>
        <authorList>
            <person name="Cui J."/>
            <person name="Yang X."/>
            <person name="Yang J."/>
            <person name="Jia R."/>
            <person name="Feng Y."/>
            <person name="Shen B."/>
        </authorList>
    </citation>
    <scope>FUNCTION</scope>
    <scope>TRANSPORTER ACTIVITY</scope>
    <scope>SUBCELLULAR LOCATION</scope>
    <scope>DISRUPTION PHENOTYPE</scope>
    <source>
        <strain evidence="4">RH</strain>
    </source>
</reference>
<evidence type="ECO:0000255" key="1"/>
<evidence type="ECO:0000256" key="2">
    <source>
        <dbReference type="SAM" id="MobiDB-lite"/>
    </source>
</evidence>
<evidence type="ECO:0000269" key="3">
    <source>
    </source>
</evidence>
<evidence type="ECO:0000303" key="4">
    <source>
    </source>
</evidence>
<evidence type="ECO:0000305" key="5"/>
<evidence type="ECO:0000312" key="6">
    <source>
        <dbReference type="EMBL" id="CEL76842.1"/>
    </source>
</evidence>
<evidence type="ECO:0000312" key="7">
    <source>
        <dbReference type="EMBL" id="ESS30895.1"/>
    </source>
</evidence>
<evidence type="ECO:0000312" key="8">
    <source>
        <dbReference type="Proteomes" id="UP000002226"/>
    </source>
</evidence>
<comment type="function">
    <text evidence="3">Inorganic phosphate transporter (PubMed:36094254). Activity is likely sodium-independent (PubMed:36094254). Exhibits higher activity under acidic pH, implying that either the monovalent form of phosphate is the preferred substrate or the transport activity is H(+)-dependent (PubMed:36094254).</text>
</comment>
<comment type="catalytic activity">
    <reaction evidence="3">
        <text>phosphate(in) = phosphate(out)</text>
        <dbReference type="Rhea" id="RHEA:32823"/>
        <dbReference type="ChEBI" id="CHEBI:43474"/>
    </reaction>
    <physiologicalReaction direction="right-to-left" evidence="5">
        <dbReference type="Rhea" id="RHEA:32825"/>
    </physiologicalReaction>
</comment>
<comment type="subcellular location">
    <subcellularLocation>
        <location evidence="3">Cell membrane</location>
        <topology evidence="1">Multi-pass membrane protein</topology>
    </subcellularLocation>
</comment>
<comment type="disruption phenotype">
    <text evidence="3">Attempts to delete the gene failed, implying that it might have critical roles for parasite growth or survival (PubMed:36094254). Conditional depletion causes growth arrest and reduces parasite motility and invasion efficiency (PubMed:36094254). Reduced uptake of inorganic phosphate (PubMed:36094254). Reduced virulence in mice (PubMed:36094254). No significant effects on the egress of parasites from the host cells and microneme secretion (PubMed:36094254). Altered expression of genes involved in protein translation, transcription, RNA processing and modification, DNA replication and repair, chromatin structure regulation, nutrient transport and metabolism, signal transduction, intracellular trafficking, protein secretion and vesicular transport (PubMed:36094254).</text>
</comment>
<comment type="similarity">
    <text evidence="5">Belongs to the major facilitator superfamily. Phosphate:H(+) symporter (TC 2.A.1.9) family.</text>
</comment>
<keyword id="KW-1003">Cell membrane</keyword>
<keyword id="KW-0472">Membrane</keyword>
<keyword id="KW-0592">Phosphate transport</keyword>
<keyword id="KW-1185">Reference proteome</keyword>
<keyword id="KW-0769">Symport</keyword>
<keyword id="KW-0812">Transmembrane</keyword>
<keyword id="KW-1133">Transmembrane helix</keyword>
<keyword id="KW-0813">Transport</keyword>
<accession>A0A125YY03</accession>
<accession>A0A0F7V7R3</accession>
<gene>
    <name evidence="5" type="primary">PT2</name>
    <name evidence="6" type="ORF">BN1205_062213</name>
    <name evidence="7" type="ORF">TGVEG_235150</name>
</gene>
<feature type="chain" id="PRO_0000459734" description="Inorganic phosphate transporter PT2">
    <location>
        <begin position="1"/>
        <end position="563"/>
    </location>
</feature>
<feature type="topological domain" description="Extracellular" evidence="5">
    <location>
        <begin position="1"/>
        <end position="127"/>
    </location>
</feature>
<feature type="transmembrane region" description="Helical" evidence="1">
    <location>
        <begin position="128"/>
        <end position="148"/>
    </location>
</feature>
<feature type="topological domain" description="Cytoplasmic" evidence="5">
    <location>
        <begin position="149"/>
        <end position="168"/>
    </location>
</feature>
<feature type="transmembrane region" description="Helical" evidence="1">
    <location>
        <begin position="169"/>
        <end position="189"/>
    </location>
</feature>
<feature type="topological domain" description="Extracellular" evidence="5">
    <location>
        <begin position="190"/>
        <end position="192"/>
    </location>
</feature>
<feature type="transmembrane region" description="Helical" evidence="1">
    <location>
        <begin position="193"/>
        <end position="213"/>
    </location>
</feature>
<feature type="topological domain" description="Cytoplasmic" evidence="5">
    <location>
        <begin position="214"/>
        <end position="217"/>
    </location>
</feature>
<feature type="transmembrane region" description="Helical" evidence="1">
    <location>
        <begin position="218"/>
        <end position="238"/>
    </location>
</feature>
<feature type="topological domain" description="Extracellular" evidence="5">
    <location>
        <begin position="239"/>
        <end position="263"/>
    </location>
</feature>
<feature type="transmembrane region" description="Helical" evidence="1">
    <location>
        <begin position="264"/>
        <end position="284"/>
    </location>
</feature>
<feature type="topological domain" description="Cytoplasmic" evidence="5">
    <location>
        <begin position="285"/>
        <end position="291"/>
    </location>
</feature>
<feature type="transmembrane region" description="Helical" evidence="1">
    <location>
        <begin position="292"/>
        <end position="312"/>
    </location>
</feature>
<feature type="topological domain" description="Extracellular" evidence="5">
    <location>
        <begin position="313"/>
        <end position="342"/>
    </location>
</feature>
<feature type="transmembrane region" description="Helical" evidence="1">
    <location>
        <begin position="343"/>
        <end position="363"/>
    </location>
</feature>
<feature type="topological domain" description="Cytoplasmic" evidence="5">
    <location>
        <begin position="364"/>
        <end position="380"/>
    </location>
</feature>
<feature type="transmembrane region" description="Helical" evidence="1">
    <location>
        <begin position="381"/>
        <end position="401"/>
    </location>
</feature>
<feature type="topological domain" description="Extracellular" evidence="5">
    <location>
        <begin position="402"/>
        <end position="412"/>
    </location>
</feature>
<feature type="transmembrane region" description="Helical" evidence="1">
    <location>
        <begin position="413"/>
        <end position="433"/>
    </location>
</feature>
<feature type="topological domain" description="Cytoplasmic" evidence="5">
    <location>
        <begin position="434"/>
        <end position="440"/>
    </location>
</feature>
<feature type="transmembrane region" description="Helical" evidence="1">
    <location>
        <begin position="441"/>
        <end position="461"/>
    </location>
</feature>
<feature type="topological domain" description="Extracellular" evidence="5">
    <location>
        <begin position="462"/>
        <end position="477"/>
    </location>
</feature>
<feature type="transmembrane region" description="Helical" evidence="1">
    <location>
        <begin position="478"/>
        <end position="498"/>
    </location>
</feature>
<feature type="topological domain" description="Cytoplasmic" evidence="5">
    <location>
        <begin position="499"/>
        <end position="504"/>
    </location>
</feature>
<feature type="transmembrane region" description="Helical" evidence="1">
    <location>
        <begin position="505"/>
        <end position="525"/>
    </location>
</feature>
<feature type="topological domain" description="Extracellular" evidence="5">
    <location>
        <begin position="526"/>
        <end position="563"/>
    </location>
</feature>
<feature type="region of interest" description="Disordered" evidence="2">
    <location>
        <begin position="1"/>
        <end position="51"/>
    </location>
</feature>
<feature type="region of interest" description="Disordered" evidence="2">
    <location>
        <begin position="67"/>
        <end position="96"/>
    </location>
</feature>
<name>PT2_TOXGV</name>